<organism>
    <name type="scientific">Oenothera elata subsp. hookeri</name>
    <name type="common">Hooker's evening primrose</name>
    <name type="synonym">Oenothera hookeri</name>
    <dbReference type="NCBI Taxonomy" id="85636"/>
    <lineage>
        <taxon>Eukaryota</taxon>
        <taxon>Viridiplantae</taxon>
        <taxon>Streptophyta</taxon>
        <taxon>Embryophyta</taxon>
        <taxon>Tracheophyta</taxon>
        <taxon>Spermatophyta</taxon>
        <taxon>Magnoliopsida</taxon>
        <taxon>eudicotyledons</taxon>
        <taxon>Gunneridae</taxon>
        <taxon>Pentapetalae</taxon>
        <taxon>rosids</taxon>
        <taxon>malvids</taxon>
        <taxon>Myrtales</taxon>
        <taxon>Onagraceae</taxon>
        <taxon>Onagroideae</taxon>
        <taxon>Onagreae</taxon>
        <taxon>Oenothera</taxon>
    </lineage>
</organism>
<reference key="1">
    <citation type="journal article" date="2000" name="Mol. Gen. Genet.">
        <title>Complete nucleotide sequence of the Oenothera elata plastid chromosome, representing plastome I of the five distinguishable Euoenothera plastomes.</title>
        <authorList>
            <person name="Hupfer H."/>
            <person name="Swiatek M."/>
            <person name="Hornung S."/>
            <person name="Herrmann R.G."/>
            <person name="Maier R.M."/>
            <person name="Chiu W.-L."/>
            <person name="Sears B."/>
        </authorList>
    </citation>
    <scope>NUCLEOTIDE SEQUENCE [LARGE SCALE GENOMIC DNA]</scope>
    <source>
        <strain>cv. Johansen</strain>
    </source>
</reference>
<gene>
    <name evidence="1" type="primary">rpl14</name>
</gene>
<evidence type="ECO:0000255" key="1">
    <source>
        <dbReference type="HAMAP-Rule" id="MF_01367"/>
    </source>
</evidence>
<evidence type="ECO:0000305" key="2"/>
<name>RK14_OENEH</name>
<proteinExistence type="inferred from homology"/>
<feature type="chain" id="PRO_0000276356" description="Large ribosomal subunit protein uL14c">
    <location>
        <begin position="1"/>
        <end position="122"/>
    </location>
</feature>
<geneLocation type="chloroplast"/>
<accession>Q9MTI9</accession>
<sequence>MIQPQTRLNVADNSGARELMCIRIIGASNRRYAHIGDIIVAVIKEALPSTSLERSEVVRAVIVRTCKELKCDDGIIIRYDDNAAVVIDQEGNPKGTRVFGAIAHELRELSFTKIVSLAPEVL</sequence>
<comment type="function">
    <text evidence="1">Binds to 23S rRNA.</text>
</comment>
<comment type="subunit">
    <text evidence="1">Part of the 50S ribosomal subunit.</text>
</comment>
<comment type="subcellular location">
    <subcellularLocation>
        <location>Plastid</location>
        <location>Chloroplast</location>
    </subcellularLocation>
</comment>
<comment type="similarity">
    <text evidence="1">Belongs to the universal ribosomal protein uL14 family.</text>
</comment>
<keyword id="KW-0150">Chloroplast</keyword>
<keyword id="KW-0934">Plastid</keyword>
<keyword id="KW-0687">Ribonucleoprotein</keyword>
<keyword id="KW-0689">Ribosomal protein</keyword>
<keyword id="KW-0694">RNA-binding</keyword>
<keyword id="KW-0699">rRNA-binding</keyword>
<protein>
    <recommendedName>
        <fullName evidence="1">Large ribosomal subunit protein uL14c</fullName>
    </recommendedName>
    <alternativeName>
        <fullName evidence="2">50S ribosomal protein L14, chloroplastic</fullName>
    </alternativeName>
</protein>
<dbReference type="EMBL" id="AJ271079">
    <property type="protein sequence ID" value="CAB67196.1"/>
    <property type="molecule type" value="Genomic_DNA"/>
</dbReference>
<dbReference type="RefSeq" id="NP_084729.1">
    <property type="nucleotide sequence ID" value="NC_002693.2"/>
</dbReference>
<dbReference type="SMR" id="Q9MTI9"/>
<dbReference type="GeneID" id="802711"/>
<dbReference type="GO" id="GO:0009507">
    <property type="term" value="C:chloroplast"/>
    <property type="evidence" value="ECO:0007669"/>
    <property type="project" value="UniProtKB-SubCell"/>
</dbReference>
<dbReference type="GO" id="GO:0022625">
    <property type="term" value="C:cytosolic large ribosomal subunit"/>
    <property type="evidence" value="ECO:0007669"/>
    <property type="project" value="TreeGrafter"/>
</dbReference>
<dbReference type="GO" id="GO:0070180">
    <property type="term" value="F:large ribosomal subunit rRNA binding"/>
    <property type="evidence" value="ECO:0007669"/>
    <property type="project" value="TreeGrafter"/>
</dbReference>
<dbReference type="GO" id="GO:0003735">
    <property type="term" value="F:structural constituent of ribosome"/>
    <property type="evidence" value="ECO:0007669"/>
    <property type="project" value="InterPro"/>
</dbReference>
<dbReference type="GO" id="GO:0006412">
    <property type="term" value="P:translation"/>
    <property type="evidence" value="ECO:0007669"/>
    <property type="project" value="UniProtKB-UniRule"/>
</dbReference>
<dbReference type="CDD" id="cd00337">
    <property type="entry name" value="Ribosomal_uL14"/>
    <property type="match status" value="1"/>
</dbReference>
<dbReference type="FunFam" id="2.40.150.20:FF:000002">
    <property type="entry name" value="50S ribosomal protein L14, chloroplastic"/>
    <property type="match status" value="1"/>
</dbReference>
<dbReference type="Gene3D" id="2.40.150.20">
    <property type="entry name" value="Ribosomal protein L14"/>
    <property type="match status" value="1"/>
</dbReference>
<dbReference type="HAMAP" id="MF_01367">
    <property type="entry name" value="Ribosomal_uL14"/>
    <property type="match status" value="1"/>
</dbReference>
<dbReference type="InterPro" id="IPR000218">
    <property type="entry name" value="Ribosomal_uL14"/>
</dbReference>
<dbReference type="InterPro" id="IPR005745">
    <property type="entry name" value="Ribosomal_uL14_bac-type"/>
</dbReference>
<dbReference type="InterPro" id="IPR019972">
    <property type="entry name" value="Ribosomal_uL14_CS"/>
</dbReference>
<dbReference type="InterPro" id="IPR036853">
    <property type="entry name" value="Ribosomal_uL14_sf"/>
</dbReference>
<dbReference type="NCBIfam" id="TIGR01067">
    <property type="entry name" value="rplN_bact"/>
    <property type="match status" value="1"/>
</dbReference>
<dbReference type="PANTHER" id="PTHR11761">
    <property type="entry name" value="50S/60S RIBOSOMAL PROTEIN L14/L23"/>
    <property type="match status" value="1"/>
</dbReference>
<dbReference type="PANTHER" id="PTHR11761:SF3">
    <property type="entry name" value="LARGE RIBOSOMAL SUBUNIT PROTEIN UL14M"/>
    <property type="match status" value="1"/>
</dbReference>
<dbReference type="Pfam" id="PF00238">
    <property type="entry name" value="Ribosomal_L14"/>
    <property type="match status" value="1"/>
</dbReference>
<dbReference type="SMART" id="SM01374">
    <property type="entry name" value="Ribosomal_L14"/>
    <property type="match status" value="1"/>
</dbReference>
<dbReference type="SUPFAM" id="SSF50193">
    <property type="entry name" value="Ribosomal protein L14"/>
    <property type="match status" value="1"/>
</dbReference>
<dbReference type="PROSITE" id="PS00049">
    <property type="entry name" value="RIBOSOMAL_L14"/>
    <property type="match status" value="1"/>
</dbReference>